<evidence type="ECO:0000255" key="1">
    <source>
        <dbReference type="HAMAP-Rule" id="MF_00755"/>
    </source>
</evidence>
<name>RNP2_SACI1</name>
<comment type="function">
    <text evidence="1">Part of ribonuclease P, a protein complex that generates mature tRNA molecules by cleaving their 5'-ends.</text>
</comment>
<comment type="catalytic activity">
    <reaction evidence="1">
        <text>Endonucleolytic cleavage of RNA, removing 5'-extranucleotides from tRNA precursor.</text>
        <dbReference type="EC" id="3.1.26.5"/>
    </reaction>
</comment>
<comment type="subunit">
    <text evidence="1">Consists of a catalytic RNA component and at least 4-5 protein subunits.</text>
</comment>
<comment type="subcellular location">
    <subcellularLocation>
        <location evidence="1">Cytoplasm</location>
    </subcellularLocation>
</comment>
<comment type="similarity">
    <text evidence="1">Belongs to the eukaryotic/archaeal RNase P protein component 2 family.</text>
</comment>
<accession>C3NHC7</accession>
<keyword id="KW-0963">Cytoplasm</keyword>
<keyword id="KW-0255">Endonuclease</keyword>
<keyword id="KW-0378">Hydrolase</keyword>
<keyword id="KW-0540">Nuclease</keyword>
<keyword id="KW-0819">tRNA processing</keyword>
<protein>
    <recommendedName>
        <fullName evidence="1">Ribonuclease P protein component 2</fullName>
        <shortName evidence="1">RNase P component 2</shortName>
        <ecNumber evidence="1">3.1.26.5</ecNumber>
    </recommendedName>
    <alternativeName>
        <fullName evidence="1">Pop5</fullName>
    </alternativeName>
</protein>
<reference key="1">
    <citation type="journal article" date="2009" name="Proc. Natl. Acad. Sci. U.S.A.">
        <title>Biogeography of the Sulfolobus islandicus pan-genome.</title>
        <authorList>
            <person name="Reno M.L."/>
            <person name="Held N.L."/>
            <person name="Fields C.J."/>
            <person name="Burke P.V."/>
            <person name="Whitaker R.J."/>
        </authorList>
    </citation>
    <scope>NUCLEOTIDE SEQUENCE [LARGE SCALE GENOMIC DNA]</scope>
    <source>
        <strain>Y.N.15.51 / Yellowstone #2</strain>
    </source>
</reference>
<proteinExistence type="inferred from homology"/>
<sequence length="143" mass="16297">MNSIQLIIDIILILWLLILTVLYLRKKSLNLNIVKNKKIVRAKRYIVFYVIAESKVKGDDLERVVRNSLKDLLGNVWLNIANPKVVTYREDTQEGIISTNRIGYKAVLASLPFAKEINGNKILIVPRRTTGSLKKAKKLIGLK</sequence>
<feature type="chain" id="PRO_1000212857" description="Ribonuclease P protein component 2">
    <location>
        <begin position="1"/>
        <end position="143"/>
    </location>
</feature>
<dbReference type="EC" id="3.1.26.5" evidence="1"/>
<dbReference type="EMBL" id="CP001404">
    <property type="protein sequence ID" value="ACP48537.1"/>
    <property type="molecule type" value="Genomic_DNA"/>
</dbReference>
<dbReference type="RefSeq" id="WP_012711400.1">
    <property type="nucleotide sequence ID" value="NC_012623.1"/>
</dbReference>
<dbReference type="SMR" id="C3NHC7"/>
<dbReference type="KEGG" id="sin:YN1551_1446"/>
<dbReference type="HOGENOM" id="CLU_1801579_0_0_2"/>
<dbReference type="Proteomes" id="UP000006818">
    <property type="component" value="Chromosome"/>
</dbReference>
<dbReference type="GO" id="GO:0005737">
    <property type="term" value="C:cytoplasm"/>
    <property type="evidence" value="ECO:0007669"/>
    <property type="project" value="UniProtKB-SubCell"/>
</dbReference>
<dbReference type="GO" id="GO:0030677">
    <property type="term" value="C:ribonuclease P complex"/>
    <property type="evidence" value="ECO:0007669"/>
    <property type="project" value="UniProtKB-UniRule"/>
</dbReference>
<dbReference type="GO" id="GO:0004526">
    <property type="term" value="F:ribonuclease P activity"/>
    <property type="evidence" value="ECO:0007669"/>
    <property type="project" value="UniProtKB-UniRule"/>
</dbReference>
<dbReference type="GO" id="GO:0001682">
    <property type="term" value="P:tRNA 5'-leader removal"/>
    <property type="evidence" value="ECO:0007669"/>
    <property type="project" value="UniProtKB-UniRule"/>
</dbReference>
<dbReference type="Gene3D" id="3.30.70.3250">
    <property type="entry name" value="Ribonuclease P, Pop5 subunit"/>
    <property type="match status" value="1"/>
</dbReference>
<dbReference type="HAMAP" id="MF_00755">
    <property type="entry name" value="RNase_P_2"/>
    <property type="match status" value="1"/>
</dbReference>
<dbReference type="InterPro" id="IPR002759">
    <property type="entry name" value="Pop5/Rpp14/Rnp2-like"/>
</dbReference>
<dbReference type="InterPro" id="IPR038085">
    <property type="entry name" value="Rnp2-like_sf"/>
</dbReference>
<dbReference type="Pfam" id="PF01900">
    <property type="entry name" value="RNase_P_Rpp14"/>
    <property type="match status" value="1"/>
</dbReference>
<dbReference type="SUPFAM" id="SSF160350">
    <property type="entry name" value="Rnp2-like"/>
    <property type="match status" value="1"/>
</dbReference>
<organism>
    <name type="scientific">Saccharolobus islandicus (strain Y.N.15.51 / Yellowstone #2)</name>
    <name type="common">Sulfolobus islandicus</name>
    <dbReference type="NCBI Taxonomy" id="419942"/>
    <lineage>
        <taxon>Archaea</taxon>
        <taxon>Thermoproteota</taxon>
        <taxon>Thermoprotei</taxon>
        <taxon>Sulfolobales</taxon>
        <taxon>Sulfolobaceae</taxon>
        <taxon>Saccharolobus</taxon>
    </lineage>
</organism>
<gene>
    <name evidence="1" type="primary">rnp2</name>
    <name type="ordered locus">YN1551_1446</name>
</gene>